<accession>A0PPG6</accession>
<name>SYA_MYCUA</name>
<organism>
    <name type="scientific">Mycobacterium ulcerans (strain Agy99)</name>
    <dbReference type="NCBI Taxonomy" id="362242"/>
    <lineage>
        <taxon>Bacteria</taxon>
        <taxon>Bacillati</taxon>
        <taxon>Actinomycetota</taxon>
        <taxon>Actinomycetes</taxon>
        <taxon>Mycobacteriales</taxon>
        <taxon>Mycobacteriaceae</taxon>
        <taxon>Mycobacterium</taxon>
        <taxon>Mycobacterium ulcerans group</taxon>
    </lineage>
</organism>
<dbReference type="EC" id="6.1.1.7" evidence="1"/>
<dbReference type="EMBL" id="CP000325">
    <property type="protein sequence ID" value="ABL04235.1"/>
    <property type="molecule type" value="Genomic_DNA"/>
</dbReference>
<dbReference type="RefSeq" id="WP_011739855.1">
    <property type="nucleotide sequence ID" value="NC_008611.1"/>
</dbReference>
<dbReference type="SMR" id="A0PPG6"/>
<dbReference type="KEGG" id="mul:MUL_1754"/>
<dbReference type="eggNOG" id="COG0013">
    <property type="taxonomic scope" value="Bacteria"/>
</dbReference>
<dbReference type="HOGENOM" id="CLU_004485_1_1_11"/>
<dbReference type="Proteomes" id="UP000000765">
    <property type="component" value="Chromosome"/>
</dbReference>
<dbReference type="GO" id="GO:0005829">
    <property type="term" value="C:cytosol"/>
    <property type="evidence" value="ECO:0007669"/>
    <property type="project" value="TreeGrafter"/>
</dbReference>
<dbReference type="GO" id="GO:0004813">
    <property type="term" value="F:alanine-tRNA ligase activity"/>
    <property type="evidence" value="ECO:0007669"/>
    <property type="project" value="UniProtKB-UniRule"/>
</dbReference>
<dbReference type="GO" id="GO:0002161">
    <property type="term" value="F:aminoacyl-tRNA deacylase activity"/>
    <property type="evidence" value="ECO:0007669"/>
    <property type="project" value="TreeGrafter"/>
</dbReference>
<dbReference type="GO" id="GO:0005524">
    <property type="term" value="F:ATP binding"/>
    <property type="evidence" value="ECO:0007669"/>
    <property type="project" value="UniProtKB-UniRule"/>
</dbReference>
<dbReference type="GO" id="GO:0000049">
    <property type="term" value="F:tRNA binding"/>
    <property type="evidence" value="ECO:0007669"/>
    <property type="project" value="UniProtKB-KW"/>
</dbReference>
<dbReference type="GO" id="GO:0008270">
    <property type="term" value="F:zinc ion binding"/>
    <property type="evidence" value="ECO:0007669"/>
    <property type="project" value="UniProtKB-UniRule"/>
</dbReference>
<dbReference type="GO" id="GO:0006419">
    <property type="term" value="P:alanyl-tRNA aminoacylation"/>
    <property type="evidence" value="ECO:0007669"/>
    <property type="project" value="UniProtKB-UniRule"/>
</dbReference>
<dbReference type="CDD" id="cd00673">
    <property type="entry name" value="AlaRS_core"/>
    <property type="match status" value="1"/>
</dbReference>
<dbReference type="FunFam" id="3.10.310.40:FF:000001">
    <property type="entry name" value="Alanine--tRNA ligase"/>
    <property type="match status" value="1"/>
</dbReference>
<dbReference type="FunFam" id="3.30.54.20:FF:000001">
    <property type="entry name" value="Alanine--tRNA ligase"/>
    <property type="match status" value="1"/>
</dbReference>
<dbReference type="FunFam" id="3.30.930.10:FF:000004">
    <property type="entry name" value="Alanine--tRNA ligase"/>
    <property type="match status" value="1"/>
</dbReference>
<dbReference type="FunFam" id="3.30.980.10:FF:000004">
    <property type="entry name" value="Alanine--tRNA ligase, cytoplasmic"/>
    <property type="match status" value="1"/>
</dbReference>
<dbReference type="Gene3D" id="2.40.30.130">
    <property type="match status" value="1"/>
</dbReference>
<dbReference type="Gene3D" id="3.10.310.40">
    <property type="match status" value="1"/>
</dbReference>
<dbReference type="Gene3D" id="3.30.54.20">
    <property type="match status" value="1"/>
</dbReference>
<dbReference type="Gene3D" id="6.10.250.550">
    <property type="match status" value="1"/>
</dbReference>
<dbReference type="Gene3D" id="3.30.930.10">
    <property type="entry name" value="Bira Bifunctional Protein, Domain 2"/>
    <property type="match status" value="1"/>
</dbReference>
<dbReference type="Gene3D" id="3.30.980.10">
    <property type="entry name" value="Threonyl-trna Synthetase, Chain A, domain 2"/>
    <property type="match status" value="1"/>
</dbReference>
<dbReference type="HAMAP" id="MF_00036_B">
    <property type="entry name" value="Ala_tRNA_synth_B"/>
    <property type="match status" value="1"/>
</dbReference>
<dbReference type="InterPro" id="IPR045864">
    <property type="entry name" value="aa-tRNA-synth_II/BPL/LPL"/>
</dbReference>
<dbReference type="InterPro" id="IPR002318">
    <property type="entry name" value="Ala-tRNA-lgiase_IIc"/>
</dbReference>
<dbReference type="InterPro" id="IPR018162">
    <property type="entry name" value="Ala-tRNA-ligase_IIc_anticod-bd"/>
</dbReference>
<dbReference type="InterPro" id="IPR018165">
    <property type="entry name" value="Ala-tRNA-synth_IIc_core"/>
</dbReference>
<dbReference type="InterPro" id="IPR018164">
    <property type="entry name" value="Ala-tRNA-synth_IIc_N"/>
</dbReference>
<dbReference type="InterPro" id="IPR050058">
    <property type="entry name" value="Ala-tRNA_ligase"/>
</dbReference>
<dbReference type="InterPro" id="IPR023033">
    <property type="entry name" value="Ala_tRNA_ligase_euk/bac"/>
</dbReference>
<dbReference type="InterPro" id="IPR003156">
    <property type="entry name" value="DHHA1_dom"/>
</dbReference>
<dbReference type="InterPro" id="IPR018163">
    <property type="entry name" value="Thr/Ala-tRNA-synth_IIc_edit"/>
</dbReference>
<dbReference type="InterPro" id="IPR009000">
    <property type="entry name" value="Transl_B-barrel_sf"/>
</dbReference>
<dbReference type="InterPro" id="IPR012947">
    <property type="entry name" value="tRNA_SAD"/>
</dbReference>
<dbReference type="NCBIfam" id="TIGR00344">
    <property type="entry name" value="alaS"/>
    <property type="match status" value="1"/>
</dbReference>
<dbReference type="PANTHER" id="PTHR11777:SF9">
    <property type="entry name" value="ALANINE--TRNA LIGASE, CYTOPLASMIC"/>
    <property type="match status" value="1"/>
</dbReference>
<dbReference type="PANTHER" id="PTHR11777">
    <property type="entry name" value="ALANYL-TRNA SYNTHETASE"/>
    <property type="match status" value="1"/>
</dbReference>
<dbReference type="Pfam" id="PF02272">
    <property type="entry name" value="DHHA1"/>
    <property type="match status" value="1"/>
</dbReference>
<dbReference type="Pfam" id="PF01411">
    <property type="entry name" value="tRNA-synt_2c"/>
    <property type="match status" value="1"/>
</dbReference>
<dbReference type="Pfam" id="PF07973">
    <property type="entry name" value="tRNA_SAD"/>
    <property type="match status" value="1"/>
</dbReference>
<dbReference type="PRINTS" id="PR00980">
    <property type="entry name" value="TRNASYNTHALA"/>
</dbReference>
<dbReference type="SMART" id="SM00863">
    <property type="entry name" value="tRNA_SAD"/>
    <property type="match status" value="1"/>
</dbReference>
<dbReference type="SUPFAM" id="SSF55681">
    <property type="entry name" value="Class II aaRS and biotin synthetases"/>
    <property type="match status" value="1"/>
</dbReference>
<dbReference type="SUPFAM" id="SSF101353">
    <property type="entry name" value="Putative anticodon-binding domain of alanyl-tRNA synthetase (AlaRS)"/>
    <property type="match status" value="1"/>
</dbReference>
<dbReference type="SUPFAM" id="SSF55186">
    <property type="entry name" value="ThrRS/AlaRS common domain"/>
    <property type="match status" value="1"/>
</dbReference>
<dbReference type="SUPFAM" id="SSF50447">
    <property type="entry name" value="Translation proteins"/>
    <property type="match status" value="1"/>
</dbReference>
<dbReference type="PROSITE" id="PS50860">
    <property type="entry name" value="AA_TRNA_LIGASE_II_ALA"/>
    <property type="match status" value="1"/>
</dbReference>
<reference key="1">
    <citation type="journal article" date="2007" name="Genome Res.">
        <title>Reductive evolution and niche adaptation inferred from the genome of Mycobacterium ulcerans, the causative agent of Buruli ulcer.</title>
        <authorList>
            <person name="Stinear T.P."/>
            <person name="Seemann T."/>
            <person name="Pidot S."/>
            <person name="Frigui W."/>
            <person name="Reysset G."/>
            <person name="Garnier T."/>
            <person name="Meurice G."/>
            <person name="Simon D."/>
            <person name="Bouchier C."/>
            <person name="Ma L."/>
            <person name="Tichit M."/>
            <person name="Porter J.L."/>
            <person name="Ryan J."/>
            <person name="Johnson P.D.R."/>
            <person name="Davies J.K."/>
            <person name="Jenkin G.A."/>
            <person name="Small P.L.C."/>
            <person name="Jones L.M."/>
            <person name="Tekaia F."/>
            <person name="Laval F."/>
            <person name="Daffe M."/>
            <person name="Parkhill J."/>
            <person name="Cole S.T."/>
        </authorList>
    </citation>
    <scope>NUCLEOTIDE SEQUENCE [LARGE SCALE GENOMIC DNA]</scope>
    <source>
        <strain>Agy99</strain>
    </source>
</reference>
<comment type="function">
    <text evidence="1">Catalyzes the attachment of alanine to tRNA(Ala) in a two-step reaction: alanine is first activated by ATP to form Ala-AMP and then transferred to the acceptor end of tRNA(Ala). Also edits incorrectly charged Ser-tRNA(Ala) and Gly-tRNA(Ala) via its editing domain.</text>
</comment>
<comment type="catalytic activity">
    <reaction evidence="1">
        <text>tRNA(Ala) + L-alanine + ATP = L-alanyl-tRNA(Ala) + AMP + diphosphate</text>
        <dbReference type="Rhea" id="RHEA:12540"/>
        <dbReference type="Rhea" id="RHEA-COMP:9657"/>
        <dbReference type="Rhea" id="RHEA-COMP:9923"/>
        <dbReference type="ChEBI" id="CHEBI:30616"/>
        <dbReference type="ChEBI" id="CHEBI:33019"/>
        <dbReference type="ChEBI" id="CHEBI:57972"/>
        <dbReference type="ChEBI" id="CHEBI:78442"/>
        <dbReference type="ChEBI" id="CHEBI:78497"/>
        <dbReference type="ChEBI" id="CHEBI:456215"/>
        <dbReference type="EC" id="6.1.1.7"/>
    </reaction>
</comment>
<comment type="cofactor">
    <cofactor evidence="1">
        <name>Zn(2+)</name>
        <dbReference type="ChEBI" id="CHEBI:29105"/>
    </cofactor>
    <text evidence="1">Binds 1 zinc ion per subunit.</text>
</comment>
<comment type="subcellular location">
    <subcellularLocation>
        <location evidence="1">Cytoplasm</location>
    </subcellularLocation>
</comment>
<comment type="domain">
    <text evidence="1">Consists of three domains; the N-terminal catalytic domain, the editing domain and the C-terminal C-Ala domain. The editing domain removes incorrectly charged amino acids, while the C-Ala domain, along with tRNA(Ala), serves as a bridge to cooperatively bring together the editing and aminoacylation centers thus stimulating deacylation of misacylated tRNAs.</text>
</comment>
<comment type="similarity">
    <text evidence="1">Belongs to the class-II aminoacyl-tRNA synthetase family.</text>
</comment>
<keyword id="KW-0030">Aminoacyl-tRNA synthetase</keyword>
<keyword id="KW-0067">ATP-binding</keyword>
<keyword id="KW-0963">Cytoplasm</keyword>
<keyword id="KW-0436">Ligase</keyword>
<keyword id="KW-0479">Metal-binding</keyword>
<keyword id="KW-0547">Nucleotide-binding</keyword>
<keyword id="KW-0648">Protein biosynthesis</keyword>
<keyword id="KW-0694">RNA-binding</keyword>
<keyword id="KW-0820">tRNA-binding</keyword>
<keyword id="KW-0862">Zinc</keyword>
<proteinExistence type="inferred from homology"/>
<feature type="chain" id="PRO_0000347688" description="Alanine--tRNA ligase">
    <location>
        <begin position="1"/>
        <end position="901"/>
    </location>
</feature>
<feature type="binding site" evidence="1">
    <location>
        <position position="581"/>
    </location>
    <ligand>
        <name>Zn(2+)</name>
        <dbReference type="ChEBI" id="CHEBI:29105"/>
    </ligand>
</feature>
<feature type="binding site" evidence="1">
    <location>
        <position position="585"/>
    </location>
    <ligand>
        <name>Zn(2+)</name>
        <dbReference type="ChEBI" id="CHEBI:29105"/>
    </ligand>
</feature>
<feature type="binding site" evidence="1">
    <location>
        <position position="684"/>
    </location>
    <ligand>
        <name>Zn(2+)</name>
        <dbReference type="ChEBI" id="CHEBI:29105"/>
    </ligand>
</feature>
<feature type="binding site" evidence="1">
    <location>
        <position position="688"/>
    </location>
    <ligand>
        <name>Zn(2+)</name>
        <dbReference type="ChEBI" id="CHEBI:29105"/>
    </ligand>
</feature>
<protein>
    <recommendedName>
        <fullName evidence="1">Alanine--tRNA ligase</fullName>
        <ecNumber evidence="1">6.1.1.7</ecNumber>
    </recommendedName>
    <alternativeName>
        <fullName evidence="1">Alanyl-tRNA synthetase</fullName>
        <shortName evidence="1">AlaRS</shortName>
    </alternativeName>
</protein>
<evidence type="ECO:0000255" key="1">
    <source>
        <dbReference type="HAMAP-Rule" id="MF_00036"/>
    </source>
</evidence>
<sequence>MQTHEIRKRFLDHFVKAGHTEVPSASVILDDPNLLFVNAGMVQFVPFFLGQRTPPYATATSIQKCIRTPDIDEVGITTRHNTFFQMAGNFSFGDYFKRGAIELAWALLTNSVADGGYGLDPEKLWATVYLDDDEAAGLWREVAGLPADRIQRRGMADNYWSMGIPGPCGPSSEIYYDRGPDYGPEGGPVVNEDRYLEIWNLVFMQNERGEGTTKEDYEILGPLPRKNIDTGMGVERVALILQGVPNVYETDLLRPIIDLVAARAPRGYDQGNHADDVRYRIIADHSRTAAILIADGVSPGNDGRGYVLRRLLRRVIRSAKLLNIDTAIVGDLMATVRDAMGPSYPELASDSDRINRIAVAEETAFNRTLASGSRLFDEVAGATRSSGVSVVSGSDAFTLHDTYGFPIELTLEMASEAGLTVDEGGFRELMAQQRRRAKADAAARKHAHADLTAYRELVDAGPTEFTGFDELTSEARILGIFVDGKRVPVVAHGQAVDADRVELVLDRTPLYAESGGQIADVGTISGTGSGSSARAAVTDVQKIAKTLWLHRVNVESGEFVEGDGVVAAADAGWRKGATQGHSGTHMVHAALRQVLGPNAVQAGSLNRPGYLRFDFNWQGPLTEEQRGQIEEVTNQAVQADFAVHTFTEQLEKAKAMGAMALFGECYPDEVRVVEIGGPFSIELCGGTHVATSAQIGPVTILGESSIGSGVRRVEAYVGLDSFRHLAKERALMAGLASSLKVPSEEVPARVASLVERLKAAEKELERARLASVRAAAVNAAAGAERIGNVRLVAQRMSSEMTPADLRTLVGDIRGKLGSDPAVVALIAAPAGGESSTVPYVVAANQAAQGLGLGANELIKHLAAAVDGRGGGKADLAQGSGKKPAGIAAALEALRAEIARVG</sequence>
<gene>
    <name evidence="1" type="primary">alaS</name>
    <name type="ordered locus">MUL_1754</name>
</gene>